<gene>
    <name evidence="1" type="primary">ccmE</name>
    <name evidence="1" type="synonym">cycJ</name>
    <name type="ordered locus">RD1_3226</name>
</gene>
<accession>Q163W5</accession>
<sequence>MKNLKKQRRIQVIALATVALVLSTALIGYAMRDGINFFRAPTQILAEPPAPTEVFRIGGLVEEGSIVRGQGETIRFSVTDGNGVVPVTYTGVLPDLFEENQGMVGTGSYINGVFEASEILAKHDETYMPAEVVDMLKEQGVYKGTEG</sequence>
<reference key="1">
    <citation type="journal article" date="2007" name="J. Bacteriol.">
        <title>The complete genome sequence of Roseobacter denitrificans reveals a mixotrophic rather than photosynthetic metabolism.</title>
        <authorList>
            <person name="Swingley W.D."/>
            <person name="Sadekar S."/>
            <person name="Mastrian S.D."/>
            <person name="Matthies H.J."/>
            <person name="Hao J."/>
            <person name="Ramos H."/>
            <person name="Acharya C.R."/>
            <person name="Conrad A.L."/>
            <person name="Taylor H.L."/>
            <person name="Dejesa L.C."/>
            <person name="Shah M.K."/>
            <person name="O'Huallachain M.E."/>
            <person name="Lince M.T."/>
            <person name="Blankenship R.E."/>
            <person name="Beatty J.T."/>
            <person name="Touchman J.W."/>
        </authorList>
    </citation>
    <scope>NUCLEOTIDE SEQUENCE [LARGE SCALE GENOMIC DNA]</scope>
    <source>
        <strain>ATCC 33942 / OCh 114</strain>
    </source>
</reference>
<organism>
    <name type="scientific">Roseobacter denitrificans (strain ATCC 33942 / OCh 114)</name>
    <name type="common">Erythrobacter sp. (strain OCh 114)</name>
    <name type="synonym">Roseobacter denitrificans</name>
    <dbReference type="NCBI Taxonomy" id="375451"/>
    <lineage>
        <taxon>Bacteria</taxon>
        <taxon>Pseudomonadati</taxon>
        <taxon>Pseudomonadota</taxon>
        <taxon>Alphaproteobacteria</taxon>
        <taxon>Rhodobacterales</taxon>
        <taxon>Roseobacteraceae</taxon>
        <taxon>Roseobacter</taxon>
    </lineage>
</organism>
<proteinExistence type="inferred from homology"/>
<protein>
    <recommendedName>
        <fullName evidence="1">Cytochrome c-type biogenesis protein CcmE</fullName>
    </recommendedName>
    <alternativeName>
        <fullName evidence="1">Cytochrome c maturation protein E</fullName>
    </alternativeName>
    <alternativeName>
        <fullName evidence="1">Heme chaperone CcmE</fullName>
    </alternativeName>
</protein>
<comment type="function">
    <text evidence="1">Heme chaperone required for the biogenesis of c-type cytochromes. Transiently binds heme delivered by CcmC and transfers the heme to apo-cytochromes in a process facilitated by CcmF and CcmH.</text>
</comment>
<comment type="subcellular location">
    <subcellularLocation>
        <location evidence="1">Cell inner membrane</location>
        <topology evidence="1">Single-pass type II membrane protein</topology>
        <orientation evidence="1">Periplasmic side</orientation>
    </subcellularLocation>
</comment>
<comment type="similarity">
    <text evidence="1">Belongs to the CcmE/CycJ family.</text>
</comment>
<name>CCME_ROSDO</name>
<evidence type="ECO:0000255" key="1">
    <source>
        <dbReference type="HAMAP-Rule" id="MF_01959"/>
    </source>
</evidence>
<feature type="chain" id="PRO_1000070847" description="Cytochrome c-type biogenesis protein CcmE">
    <location>
        <begin position="1"/>
        <end position="147"/>
    </location>
</feature>
<feature type="topological domain" description="Cytoplasmic" evidence="1">
    <location>
        <begin position="1"/>
        <end position="9"/>
    </location>
</feature>
<feature type="transmembrane region" description="Helical; Signal-anchor for type II membrane protein" evidence="1">
    <location>
        <begin position="10"/>
        <end position="30"/>
    </location>
</feature>
<feature type="topological domain" description="Periplasmic" evidence="1">
    <location>
        <begin position="31"/>
        <end position="147"/>
    </location>
</feature>
<feature type="binding site" description="covalent" evidence="1">
    <location>
        <position position="123"/>
    </location>
    <ligand>
        <name>heme</name>
        <dbReference type="ChEBI" id="CHEBI:30413"/>
    </ligand>
</feature>
<feature type="binding site" description="axial binding residue" evidence="1">
    <location>
        <position position="127"/>
    </location>
    <ligand>
        <name>heme</name>
        <dbReference type="ChEBI" id="CHEBI:30413"/>
    </ligand>
    <ligandPart>
        <name>Fe</name>
        <dbReference type="ChEBI" id="CHEBI:18248"/>
    </ligandPart>
</feature>
<keyword id="KW-0997">Cell inner membrane</keyword>
<keyword id="KW-1003">Cell membrane</keyword>
<keyword id="KW-0201">Cytochrome c-type biogenesis</keyword>
<keyword id="KW-0349">Heme</keyword>
<keyword id="KW-0408">Iron</keyword>
<keyword id="KW-0472">Membrane</keyword>
<keyword id="KW-0479">Metal-binding</keyword>
<keyword id="KW-1185">Reference proteome</keyword>
<keyword id="KW-0735">Signal-anchor</keyword>
<keyword id="KW-0812">Transmembrane</keyword>
<keyword id="KW-1133">Transmembrane helix</keyword>
<dbReference type="EMBL" id="CP000362">
    <property type="protein sequence ID" value="ABG32728.1"/>
    <property type="molecule type" value="Genomic_DNA"/>
</dbReference>
<dbReference type="RefSeq" id="WP_011569344.1">
    <property type="nucleotide sequence ID" value="NC_008209.1"/>
</dbReference>
<dbReference type="SMR" id="Q163W5"/>
<dbReference type="STRING" id="375451.RD1_3226"/>
<dbReference type="KEGG" id="rde:RD1_3226"/>
<dbReference type="eggNOG" id="COG2332">
    <property type="taxonomic scope" value="Bacteria"/>
</dbReference>
<dbReference type="HOGENOM" id="CLU_079503_1_1_5"/>
<dbReference type="OrthoDB" id="9793584at2"/>
<dbReference type="Proteomes" id="UP000007029">
    <property type="component" value="Chromosome"/>
</dbReference>
<dbReference type="GO" id="GO:0005886">
    <property type="term" value="C:plasma membrane"/>
    <property type="evidence" value="ECO:0007669"/>
    <property type="project" value="UniProtKB-SubCell"/>
</dbReference>
<dbReference type="GO" id="GO:0020037">
    <property type="term" value="F:heme binding"/>
    <property type="evidence" value="ECO:0007669"/>
    <property type="project" value="InterPro"/>
</dbReference>
<dbReference type="GO" id="GO:0046872">
    <property type="term" value="F:metal ion binding"/>
    <property type="evidence" value="ECO:0007669"/>
    <property type="project" value="UniProtKB-KW"/>
</dbReference>
<dbReference type="GO" id="GO:0017004">
    <property type="term" value="P:cytochrome complex assembly"/>
    <property type="evidence" value="ECO:0007669"/>
    <property type="project" value="UniProtKB-KW"/>
</dbReference>
<dbReference type="Gene3D" id="2.40.50.140">
    <property type="entry name" value="Nucleic acid-binding proteins"/>
    <property type="match status" value="1"/>
</dbReference>
<dbReference type="HAMAP" id="MF_01959">
    <property type="entry name" value="CcmE"/>
    <property type="match status" value="1"/>
</dbReference>
<dbReference type="InterPro" id="IPR004329">
    <property type="entry name" value="CcmE"/>
</dbReference>
<dbReference type="InterPro" id="IPR036127">
    <property type="entry name" value="CcmE-like_sf"/>
</dbReference>
<dbReference type="InterPro" id="IPR012340">
    <property type="entry name" value="NA-bd_OB-fold"/>
</dbReference>
<dbReference type="NCBIfam" id="NF009727">
    <property type="entry name" value="PRK13254.1-1"/>
    <property type="match status" value="1"/>
</dbReference>
<dbReference type="NCBIfam" id="NF009731">
    <property type="entry name" value="PRK13254.1-5"/>
    <property type="match status" value="1"/>
</dbReference>
<dbReference type="PANTHER" id="PTHR34128">
    <property type="entry name" value="CYTOCHROME C-TYPE BIOGENESIS PROTEIN CCME HOMOLOG, MITOCHONDRIAL"/>
    <property type="match status" value="1"/>
</dbReference>
<dbReference type="PANTHER" id="PTHR34128:SF2">
    <property type="entry name" value="CYTOCHROME C-TYPE BIOGENESIS PROTEIN CCME HOMOLOG, MITOCHONDRIAL"/>
    <property type="match status" value="1"/>
</dbReference>
<dbReference type="Pfam" id="PF03100">
    <property type="entry name" value="CcmE"/>
    <property type="match status" value="1"/>
</dbReference>
<dbReference type="SUPFAM" id="SSF82093">
    <property type="entry name" value="Heme chaperone CcmE"/>
    <property type="match status" value="1"/>
</dbReference>